<evidence type="ECO:0000255" key="1">
    <source>
        <dbReference type="HAMAP-Rule" id="MF_01274"/>
    </source>
</evidence>
<proteinExistence type="inferred from homology"/>
<name>COAX_CLOB8</name>
<gene>
    <name evidence="1" type="primary">coaX</name>
    <name type="ordered locus">Cbei_0102</name>
</gene>
<comment type="function">
    <text evidence="1">Catalyzes the phosphorylation of pantothenate (Pan), the first step in CoA biosynthesis.</text>
</comment>
<comment type="catalytic activity">
    <reaction evidence="1">
        <text>(R)-pantothenate + ATP = (R)-4'-phosphopantothenate + ADP + H(+)</text>
        <dbReference type="Rhea" id="RHEA:16373"/>
        <dbReference type="ChEBI" id="CHEBI:10986"/>
        <dbReference type="ChEBI" id="CHEBI:15378"/>
        <dbReference type="ChEBI" id="CHEBI:29032"/>
        <dbReference type="ChEBI" id="CHEBI:30616"/>
        <dbReference type="ChEBI" id="CHEBI:456216"/>
        <dbReference type="EC" id="2.7.1.33"/>
    </reaction>
</comment>
<comment type="cofactor">
    <cofactor evidence="1">
        <name>NH4(+)</name>
        <dbReference type="ChEBI" id="CHEBI:28938"/>
    </cofactor>
    <cofactor evidence="1">
        <name>K(+)</name>
        <dbReference type="ChEBI" id="CHEBI:29103"/>
    </cofactor>
    <text evidence="1">A monovalent cation. Ammonium or potassium.</text>
</comment>
<comment type="pathway">
    <text evidence="1">Cofactor biosynthesis; coenzyme A biosynthesis; CoA from (R)-pantothenate: step 1/5.</text>
</comment>
<comment type="subunit">
    <text evidence="1">Homodimer.</text>
</comment>
<comment type="subcellular location">
    <subcellularLocation>
        <location evidence="1">Cytoplasm</location>
    </subcellularLocation>
</comment>
<comment type="similarity">
    <text evidence="1">Belongs to the type III pantothenate kinase family.</text>
</comment>
<sequence length="266" mass="29435">MILLVDAGNTNIVLGVHNGERYIASWRISSEGNKTSDEYGIQVMQLFNLSDIDPKNITGVIVSSVVPNIMHSLENMLRKCFCHEPIIVGPGVKTGINIKYDNPREVGADRIVNAVAAYEIYKRPVIIIDFGTATTFCAVRANGDYLGGCICPGIRISADALFERAAKLPRVELEVPKNMICKNTVSSMQSGIIFGYIGQVEYIVKKMKQEMKNSKYKEEPFVLATGGLANLIAKETDVIDKVDSDLTLEGLKILYEKNKEIEISQR</sequence>
<organism>
    <name type="scientific">Clostridium beijerinckii (strain ATCC 51743 / NCIMB 8052)</name>
    <name type="common">Clostridium acetobutylicum</name>
    <dbReference type="NCBI Taxonomy" id="290402"/>
    <lineage>
        <taxon>Bacteria</taxon>
        <taxon>Bacillati</taxon>
        <taxon>Bacillota</taxon>
        <taxon>Clostridia</taxon>
        <taxon>Eubacteriales</taxon>
        <taxon>Clostridiaceae</taxon>
        <taxon>Clostridium</taxon>
    </lineage>
</organism>
<accession>A6LPL2</accession>
<dbReference type="EC" id="2.7.1.33" evidence="1"/>
<dbReference type="EMBL" id="CP000721">
    <property type="protein sequence ID" value="ABR32292.1"/>
    <property type="molecule type" value="Genomic_DNA"/>
</dbReference>
<dbReference type="RefSeq" id="WP_011967466.1">
    <property type="nucleotide sequence ID" value="NC_009617.1"/>
</dbReference>
<dbReference type="SMR" id="A6LPL2"/>
<dbReference type="KEGG" id="cbe:Cbei_0102"/>
<dbReference type="eggNOG" id="COG1521">
    <property type="taxonomic scope" value="Bacteria"/>
</dbReference>
<dbReference type="HOGENOM" id="CLU_066627_1_0_9"/>
<dbReference type="UniPathway" id="UPA00241">
    <property type="reaction ID" value="UER00352"/>
</dbReference>
<dbReference type="Proteomes" id="UP000000565">
    <property type="component" value="Chromosome"/>
</dbReference>
<dbReference type="GO" id="GO:0005737">
    <property type="term" value="C:cytoplasm"/>
    <property type="evidence" value="ECO:0007669"/>
    <property type="project" value="UniProtKB-SubCell"/>
</dbReference>
<dbReference type="GO" id="GO:0005524">
    <property type="term" value="F:ATP binding"/>
    <property type="evidence" value="ECO:0007669"/>
    <property type="project" value="UniProtKB-UniRule"/>
</dbReference>
<dbReference type="GO" id="GO:0046872">
    <property type="term" value="F:metal ion binding"/>
    <property type="evidence" value="ECO:0007669"/>
    <property type="project" value="UniProtKB-KW"/>
</dbReference>
<dbReference type="GO" id="GO:0004594">
    <property type="term" value="F:pantothenate kinase activity"/>
    <property type="evidence" value="ECO:0007669"/>
    <property type="project" value="UniProtKB-UniRule"/>
</dbReference>
<dbReference type="GO" id="GO:0015937">
    <property type="term" value="P:coenzyme A biosynthetic process"/>
    <property type="evidence" value="ECO:0007669"/>
    <property type="project" value="UniProtKB-UniRule"/>
</dbReference>
<dbReference type="CDD" id="cd24015">
    <property type="entry name" value="ASKHA_NBD_PanK-III"/>
    <property type="match status" value="1"/>
</dbReference>
<dbReference type="Gene3D" id="3.30.420.40">
    <property type="match status" value="2"/>
</dbReference>
<dbReference type="HAMAP" id="MF_01274">
    <property type="entry name" value="Pantothen_kinase_3"/>
    <property type="match status" value="1"/>
</dbReference>
<dbReference type="InterPro" id="IPR043129">
    <property type="entry name" value="ATPase_NBD"/>
</dbReference>
<dbReference type="InterPro" id="IPR004619">
    <property type="entry name" value="Type_III_PanK"/>
</dbReference>
<dbReference type="NCBIfam" id="TIGR00671">
    <property type="entry name" value="baf"/>
    <property type="match status" value="1"/>
</dbReference>
<dbReference type="NCBIfam" id="NF009847">
    <property type="entry name" value="PRK13318.1-5"/>
    <property type="match status" value="1"/>
</dbReference>
<dbReference type="NCBIfam" id="NF009848">
    <property type="entry name" value="PRK13318.1-6"/>
    <property type="match status" value="1"/>
</dbReference>
<dbReference type="NCBIfam" id="NF009855">
    <property type="entry name" value="PRK13321.1"/>
    <property type="match status" value="1"/>
</dbReference>
<dbReference type="PANTHER" id="PTHR34265">
    <property type="entry name" value="TYPE III PANTOTHENATE KINASE"/>
    <property type="match status" value="1"/>
</dbReference>
<dbReference type="PANTHER" id="PTHR34265:SF1">
    <property type="entry name" value="TYPE III PANTOTHENATE KINASE"/>
    <property type="match status" value="1"/>
</dbReference>
<dbReference type="Pfam" id="PF03309">
    <property type="entry name" value="Pan_kinase"/>
    <property type="match status" value="1"/>
</dbReference>
<dbReference type="SUPFAM" id="SSF53067">
    <property type="entry name" value="Actin-like ATPase domain"/>
    <property type="match status" value="2"/>
</dbReference>
<reference key="1">
    <citation type="submission" date="2007-06" db="EMBL/GenBank/DDBJ databases">
        <title>Complete sequence of Clostridium beijerinckii NCIMB 8052.</title>
        <authorList>
            <consortium name="US DOE Joint Genome Institute"/>
            <person name="Copeland A."/>
            <person name="Lucas S."/>
            <person name="Lapidus A."/>
            <person name="Barry K."/>
            <person name="Detter J.C."/>
            <person name="Glavina del Rio T."/>
            <person name="Hammon N."/>
            <person name="Israni S."/>
            <person name="Dalin E."/>
            <person name="Tice H."/>
            <person name="Pitluck S."/>
            <person name="Sims D."/>
            <person name="Brettin T."/>
            <person name="Bruce D."/>
            <person name="Tapia R."/>
            <person name="Brainard J."/>
            <person name="Schmutz J."/>
            <person name="Larimer F."/>
            <person name="Land M."/>
            <person name="Hauser L."/>
            <person name="Kyrpides N."/>
            <person name="Mikhailova N."/>
            <person name="Bennet G."/>
            <person name="Cann I."/>
            <person name="Chen J.-S."/>
            <person name="Contreras A.L."/>
            <person name="Jones D."/>
            <person name="Kashket E."/>
            <person name="Mitchell W."/>
            <person name="Stoddard S."/>
            <person name="Schwarz W."/>
            <person name="Qureshi N."/>
            <person name="Young M."/>
            <person name="Shi Z."/>
            <person name="Ezeji T."/>
            <person name="White B."/>
            <person name="Blaschek H."/>
            <person name="Richardson P."/>
        </authorList>
    </citation>
    <scope>NUCLEOTIDE SEQUENCE [LARGE SCALE GENOMIC DNA]</scope>
    <source>
        <strain>ATCC 51743 / NCIMB 8052</strain>
    </source>
</reference>
<protein>
    <recommendedName>
        <fullName evidence="1">Type III pantothenate kinase</fullName>
        <ecNumber evidence="1">2.7.1.33</ecNumber>
    </recommendedName>
    <alternativeName>
        <fullName evidence="1">PanK-III</fullName>
    </alternativeName>
    <alternativeName>
        <fullName evidence="1">Pantothenic acid kinase</fullName>
    </alternativeName>
</protein>
<feature type="chain" id="PRO_1000085848" description="Type III pantothenate kinase">
    <location>
        <begin position="1"/>
        <end position="266"/>
    </location>
</feature>
<feature type="active site" description="Proton acceptor" evidence="1">
    <location>
        <position position="109"/>
    </location>
</feature>
<feature type="binding site" evidence="1">
    <location>
        <begin position="6"/>
        <end position="13"/>
    </location>
    <ligand>
        <name>ATP</name>
        <dbReference type="ChEBI" id="CHEBI:30616"/>
    </ligand>
</feature>
<feature type="binding site" evidence="1">
    <location>
        <position position="100"/>
    </location>
    <ligand>
        <name>substrate</name>
    </ligand>
</feature>
<feature type="binding site" evidence="1">
    <location>
        <begin position="107"/>
        <end position="110"/>
    </location>
    <ligand>
        <name>substrate</name>
    </ligand>
</feature>
<feature type="binding site" evidence="1">
    <location>
        <position position="129"/>
    </location>
    <ligand>
        <name>K(+)</name>
        <dbReference type="ChEBI" id="CHEBI:29103"/>
    </ligand>
</feature>
<feature type="binding site" evidence="1">
    <location>
        <position position="132"/>
    </location>
    <ligand>
        <name>ATP</name>
        <dbReference type="ChEBI" id="CHEBI:30616"/>
    </ligand>
</feature>
<feature type="binding site" evidence="1">
    <location>
        <position position="184"/>
    </location>
    <ligand>
        <name>substrate</name>
    </ligand>
</feature>
<keyword id="KW-0067">ATP-binding</keyword>
<keyword id="KW-0173">Coenzyme A biosynthesis</keyword>
<keyword id="KW-0963">Cytoplasm</keyword>
<keyword id="KW-0418">Kinase</keyword>
<keyword id="KW-0479">Metal-binding</keyword>
<keyword id="KW-0547">Nucleotide-binding</keyword>
<keyword id="KW-0630">Potassium</keyword>
<keyword id="KW-0808">Transferase</keyword>